<keyword id="KW-1185">Reference proteome</keyword>
<accession>C0H461</accession>
<feature type="chain" id="PRO_0000380085" description="Uncharacterized protein YrzQ">
    <location>
        <begin position="1"/>
        <end position="43"/>
    </location>
</feature>
<sequence length="43" mass="5042">MNRTMTSLLAMGAGALVYRMATQSDMLNNRSMKRMRRRITKMF</sequence>
<protein>
    <recommendedName>
        <fullName>Uncharacterized protein YrzQ</fullName>
    </recommendedName>
</protein>
<name>YRZQ_BACSU</name>
<organism>
    <name type="scientific">Bacillus subtilis (strain 168)</name>
    <dbReference type="NCBI Taxonomy" id="224308"/>
    <lineage>
        <taxon>Bacteria</taxon>
        <taxon>Bacillati</taxon>
        <taxon>Bacillota</taxon>
        <taxon>Bacilli</taxon>
        <taxon>Bacillales</taxon>
        <taxon>Bacillaceae</taxon>
        <taxon>Bacillus</taxon>
    </lineage>
</organism>
<gene>
    <name type="primary">yrzQ</name>
    <name type="ordered locus">BSU27468</name>
</gene>
<proteinExistence type="predicted"/>
<reference key="1">
    <citation type="journal article" date="1997" name="Nature">
        <title>The complete genome sequence of the Gram-positive bacterium Bacillus subtilis.</title>
        <authorList>
            <person name="Kunst F."/>
            <person name="Ogasawara N."/>
            <person name="Moszer I."/>
            <person name="Albertini A.M."/>
            <person name="Alloni G."/>
            <person name="Azevedo V."/>
            <person name="Bertero M.G."/>
            <person name="Bessieres P."/>
            <person name="Bolotin A."/>
            <person name="Borchert S."/>
            <person name="Borriss R."/>
            <person name="Boursier L."/>
            <person name="Brans A."/>
            <person name="Braun M."/>
            <person name="Brignell S.C."/>
            <person name="Bron S."/>
            <person name="Brouillet S."/>
            <person name="Bruschi C.V."/>
            <person name="Caldwell B."/>
            <person name="Capuano V."/>
            <person name="Carter N.M."/>
            <person name="Choi S.-K."/>
            <person name="Codani J.-J."/>
            <person name="Connerton I.F."/>
            <person name="Cummings N.J."/>
            <person name="Daniel R.A."/>
            <person name="Denizot F."/>
            <person name="Devine K.M."/>
            <person name="Duesterhoeft A."/>
            <person name="Ehrlich S.D."/>
            <person name="Emmerson P.T."/>
            <person name="Entian K.-D."/>
            <person name="Errington J."/>
            <person name="Fabret C."/>
            <person name="Ferrari E."/>
            <person name="Foulger D."/>
            <person name="Fritz C."/>
            <person name="Fujita M."/>
            <person name="Fujita Y."/>
            <person name="Fuma S."/>
            <person name="Galizzi A."/>
            <person name="Galleron N."/>
            <person name="Ghim S.-Y."/>
            <person name="Glaser P."/>
            <person name="Goffeau A."/>
            <person name="Golightly E.J."/>
            <person name="Grandi G."/>
            <person name="Guiseppi G."/>
            <person name="Guy B.J."/>
            <person name="Haga K."/>
            <person name="Haiech J."/>
            <person name="Harwood C.R."/>
            <person name="Henaut A."/>
            <person name="Hilbert H."/>
            <person name="Holsappel S."/>
            <person name="Hosono S."/>
            <person name="Hullo M.-F."/>
            <person name="Itaya M."/>
            <person name="Jones L.-M."/>
            <person name="Joris B."/>
            <person name="Karamata D."/>
            <person name="Kasahara Y."/>
            <person name="Klaerr-Blanchard M."/>
            <person name="Klein C."/>
            <person name="Kobayashi Y."/>
            <person name="Koetter P."/>
            <person name="Koningstein G."/>
            <person name="Krogh S."/>
            <person name="Kumano M."/>
            <person name="Kurita K."/>
            <person name="Lapidus A."/>
            <person name="Lardinois S."/>
            <person name="Lauber J."/>
            <person name="Lazarevic V."/>
            <person name="Lee S.-M."/>
            <person name="Levine A."/>
            <person name="Liu H."/>
            <person name="Masuda S."/>
            <person name="Mauel C."/>
            <person name="Medigue C."/>
            <person name="Medina N."/>
            <person name="Mellado R.P."/>
            <person name="Mizuno M."/>
            <person name="Moestl D."/>
            <person name="Nakai S."/>
            <person name="Noback M."/>
            <person name="Noone D."/>
            <person name="O'Reilly M."/>
            <person name="Ogawa K."/>
            <person name="Ogiwara A."/>
            <person name="Oudega B."/>
            <person name="Park S.-H."/>
            <person name="Parro V."/>
            <person name="Pohl T.M."/>
            <person name="Portetelle D."/>
            <person name="Porwollik S."/>
            <person name="Prescott A.M."/>
            <person name="Presecan E."/>
            <person name="Pujic P."/>
            <person name="Purnelle B."/>
            <person name="Rapoport G."/>
            <person name="Rey M."/>
            <person name="Reynolds S."/>
            <person name="Rieger M."/>
            <person name="Rivolta C."/>
            <person name="Rocha E."/>
            <person name="Roche B."/>
            <person name="Rose M."/>
            <person name="Sadaie Y."/>
            <person name="Sato T."/>
            <person name="Scanlan E."/>
            <person name="Schleich S."/>
            <person name="Schroeter R."/>
            <person name="Scoffone F."/>
            <person name="Sekiguchi J."/>
            <person name="Sekowska A."/>
            <person name="Seror S.J."/>
            <person name="Serror P."/>
            <person name="Shin B.-S."/>
            <person name="Soldo B."/>
            <person name="Sorokin A."/>
            <person name="Tacconi E."/>
            <person name="Takagi T."/>
            <person name="Takahashi H."/>
            <person name="Takemaru K."/>
            <person name="Takeuchi M."/>
            <person name="Tamakoshi A."/>
            <person name="Tanaka T."/>
            <person name="Terpstra P."/>
            <person name="Tognoni A."/>
            <person name="Tosato V."/>
            <person name="Uchiyama S."/>
            <person name="Vandenbol M."/>
            <person name="Vannier F."/>
            <person name="Vassarotti A."/>
            <person name="Viari A."/>
            <person name="Wambutt R."/>
            <person name="Wedler E."/>
            <person name="Wedler H."/>
            <person name="Weitzenegger T."/>
            <person name="Winters P."/>
            <person name="Wipat A."/>
            <person name="Yamamoto H."/>
            <person name="Yamane K."/>
            <person name="Yasumoto K."/>
            <person name="Yata K."/>
            <person name="Yoshida K."/>
            <person name="Yoshikawa H.-F."/>
            <person name="Zumstein E."/>
            <person name="Yoshikawa H."/>
            <person name="Danchin A."/>
        </authorList>
    </citation>
    <scope>NUCLEOTIDE SEQUENCE [LARGE SCALE GENOMIC DNA]</scope>
    <source>
        <strain>168</strain>
    </source>
</reference>
<dbReference type="EMBL" id="AL009126">
    <property type="protein sequence ID" value="CAX52672.1"/>
    <property type="molecule type" value="Genomic_DNA"/>
</dbReference>
<dbReference type="RefSeq" id="WP_003229780.1">
    <property type="nucleotide sequence ID" value="NZ_OZ025638.1"/>
</dbReference>
<dbReference type="RefSeq" id="YP_003097766.1">
    <property type="nucleotide sequence ID" value="NC_000964.3"/>
</dbReference>
<dbReference type="FunCoup" id="C0H461">
    <property type="interactions" value="20"/>
</dbReference>
<dbReference type="STRING" id="224308.BSU27468"/>
<dbReference type="PaxDb" id="224308-BSU27468"/>
<dbReference type="EnsemblBacteria" id="CAX52672">
    <property type="protein sequence ID" value="CAX52672"/>
    <property type="gene ID" value="BSU_27468"/>
</dbReference>
<dbReference type="GeneID" id="8302994"/>
<dbReference type="KEGG" id="bsu:BSU27468"/>
<dbReference type="PATRIC" id="fig|224308.179.peg.2983"/>
<dbReference type="InParanoid" id="C0H461"/>
<dbReference type="OrthoDB" id="2919648at2"/>
<dbReference type="BioCyc" id="BSUB:BSU27468-MONOMER"/>
<dbReference type="Proteomes" id="UP000001570">
    <property type="component" value="Chromosome"/>
</dbReference>
<dbReference type="InterPro" id="IPR025029">
    <property type="entry name" value="DUF3918"/>
</dbReference>
<dbReference type="Pfam" id="PF13056">
    <property type="entry name" value="DUF3918"/>
    <property type="match status" value="1"/>
</dbReference>